<gene>
    <name type="primary">ZWINT</name>
</gene>
<dbReference type="EMBL" id="BC110184">
    <property type="protein sequence ID" value="AAI10185.1"/>
    <property type="molecule type" value="mRNA"/>
</dbReference>
<dbReference type="RefSeq" id="NP_001035619.1">
    <property type="nucleotide sequence ID" value="NM_001040529.2"/>
</dbReference>
<dbReference type="SMR" id="Q2TBH8"/>
<dbReference type="FunCoup" id="Q2TBH8">
    <property type="interactions" value="571"/>
</dbReference>
<dbReference type="STRING" id="9913.ENSBTAP00000003439"/>
<dbReference type="PaxDb" id="9913-ENSBTAP00000003439"/>
<dbReference type="Ensembl" id="ENSBTAT00000003439.5">
    <property type="protein sequence ID" value="ENSBTAP00000003439.4"/>
    <property type="gene ID" value="ENSBTAG00000002655.6"/>
</dbReference>
<dbReference type="GeneID" id="514564"/>
<dbReference type="KEGG" id="bta:514564"/>
<dbReference type="CTD" id="11130"/>
<dbReference type="VEuPathDB" id="HostDB:ENSBTAG00000002655"/>
<dbReference type="eggNOG" id="ENOG502S6PG">
    <property type="taxonomic scope" value="Eukaryota"/>
</dbReference>
<dbReference type="GeneTree" id="ENSGT00390000017639"/>
<dbReference type="HOGENOM" id="CLU_089675_0_0_1"/>
<dbReference type="InParanoid" id="Q2TBH8"/>
<dbReference type="OMA" id="TEAKEQW"/>
<dbReference type="OrthoDB" id="9893446at2759"/>
<dbReference type="TreeFam" id="TF338101"/>
<dbReference type="Reactome" id="R-BTA-141444">
    <property type="pathway name" value="Amplification of signal from unattached kinetochores via a MAD2 inhibitory signal"/>
</dbReference>
<dbReference type="Reactome" id="R-BTA-2467813">
    <property type="pathway name" value="Separation of Sister Chromatids"/>
</dbReference>
<dbReference type="Reactome" id="R-BTA-2500257">
    <property type="pathway name" value="Resolution of Sister Chromatid Cohesion"/>
</dbReference>
<dbReference type="Reactome" id="R-BTA-5663220">
    <property type="pathway name" value="RHO GTPases Activate Formins"/>
</dbReference>
<dbReference type="Reactome" id="R-BTA-68877">
    <property type="pathway name" value="Mitotic Prometaphase"/>
</dbReference>
<dbReference type="Reactome" id="R-BTA-9648025">
    <property type="pathway name" value="EML4 and NUDC in mitotic spindle formation"/>
</dbReference>
<dbReference type="Proteomes" id="UP000009136">
    <property type="component" value="Chromosome 26"/>
</dbReference>
<dbReference type="Bgee" id="ENSBTAG00000002655">
    <property type="expression patterns" value="Expressed in pharyngeal tonsil and 110 other cell types or tissues"/>
</dbReference>
<dbReference type="GO" id="GO:0005829">
    <property type="term" value="C:cytosol"/>
    <property type="evidence" value="ECO:0000318"/>
    <property type="project" value="GO_Central"/>
</dbReference>
<dbReference type="GO" id="GO:0030425">
    <property type="term" value="C:dendrite"/>
    <property type="evidence" value="ECO:0000318"/>
    <property type="project" value="GO_Central"/>
</dbReference>
<dbReference type="GO" id="GO:0000776">
    <property type="term" value="C:kinetochore"/>
    <property type="evidence" value="ECO:0000250"/>
    <property type="project" value="UniProtKB"/>
</dbReference>
<dbReference type="GO" id="GO:0180019">
    <property type="term" value="C:Knl1/Spc105 complex"/>
    <property type="evidence" value="ECO:0000250"/>
    <property type="project" value="UniProtKB"/>
</dbReference>
<dbReference type="GO" id="GO:0016604">
    <property type="term" value="C:nuclear body"/>
    <property type="evidence" value="ECO:0000318"/>
    <property type="project" value="GO_Central"/>
</dbReference>
<dbReference type="GO" id="GO:0051301">
    <property type="term" value="P:cell division"/>
    <property type="evidence" value="ECO:0007669"/>
    <property type="project" value="UniProtKB-KW"/>
</dbReference>
<dbReference type="GO" id="GO:0051649">
    <property type="term" value="P:establishment of localization in cell"/>
    <property type="evidence" value="ECO:0000318"/>
    <property type="project" value="GO_Central"/>
</dbReference>
<dbReference type="GO" id="GO:0031619">
    <property type="term" value="P:homologous chromosome orientation in meiotic metaphase I"/>
    <property type="evidence" value="ECO:0000250"/>
    <property type="project" value="UniProtKB"/>
</dbReference>
<dbReference type="GO" id="GO:0000070">
    <property type="term" value="P:mitotic sister chromatid segregation"/>
    <property type="evidence" value="ECO:0000318"/>
    <property type="project" value="GO_Central"/>
</dbReference>
<dbReference type="GO" id="GO:0007094">
    <property type="term" value="P:mitotic spindle assembly checkpoint signaling"/>
    <property type="evidence" value="ECO:0000318"/>
    <property type="project" value="GO_Central"/>
</dbReference>
<dbReference type="GO" id="GO:1905325">
    <property type="term" value="P:regulation of meiosis I spindle assembly checkpoint"/>
    <property type="evidence" value="ECO:0000250"/>
    <property type="project" value="UniProtKB"/>
</dbReference>
<dbReference type="InterPro" id="IPR029092">
    <property type="entry name" value="Zwint-1"/>
</dbReference>
<dbReference type="PANTHER" id="PTHR31504:SF1">
    <property type="entry name" value="ZW10 INTERACTOR"/>
    <property type="match status" value="1"/>
</dbReference>
<dbReference type="PANTHER" id="PTHR31504">
    <property type="entry name" value="ZW10 INTERACTOR ZWINT"/>
    <property type="match status" value="1"/>
</dbReference>
<dbReference type="Pfam" id="PF15556">
    <property type="entry name" value="Zwint"/>
    <property type="match status" value="1"/>
</dbReference>
<evidence type="ECO:0000250" key="1">
    <source>
        <dbReference type="UniProtKB" id="O95229"/>
    </source>
</evidence>
<evidence type="ECO:0000250" key="2">
    <source>
        <dbReference type="UniProtKB" id="Q9CQU5"/>
    </source>
</evidence>
<evidence type="ECO:0000255" key="3"/>
<evidence type="ECO:0000256" key="4">
    <source>
        <dbReference type="SAM" id="MobiDB-lite"/>
    </source>
</evidence>
<evidence type="ECO:0000305" key="5"/>
<evidence type="ECO:0000312" key="6">
    <source>
        <dbReference type="EMBL" id="AAI10185.1"/>
    </source>
</evidence>
<evidence type="ECO:0000312" key="7">
    <source>
        <dbReference type="Proteomes" id="UP000009136"/>
    </source>
</evidence>
<comment type="function">
    <text evidence="1 2">Acts as a component of the outer kinetochore KNL1 complex that serves as a docking point for spindle assembly checkpoint components and mediates microtubule-kinetochore interactions. Kinetochores, consisting of a centromere-associated inner segment and a microtubule-contacting outer segment, play a crucial role in chromosome segregation by mediating the physical connection between centromeric DNA and spindle microtubules. The outer kinetochore is made up of the ten-subunit KMN network, comprising the MIS12, NDC80 and KNL1 complexes, and auxiliary microtubule-associated components; together they connect the outer kinetochore with the inner kinetochore, bind microtubules, and mediate interactions with mitotic checkpoint proteins that delay anaphase until chromosomes are bioriented on the spindle. Targets the RZZ complex to the kinetochore at prometaphase (By similarity). Recruits MAD2L1 to the kinetochore, but is not required for BUB1B localization. In addition to orienting mitotic chromosomes, it is also essential for alignment of homologous chromosomes during meiotic metaphase I. In meiosis I, required to activate the spindle assembly checkpoint at unattached kinetochores to correct erroneous kinetochore-microtubule attachments (By similarity).</text>
</comment>
<comment type="subunit">
    <text evidence="1">Component of the KNL1 complex composed of KNL1 and ZWINT. Part of the ten-subunit outer kinetochore KMN network that includes the KNL1, MIS12 and NDC80 complexes; a bioriented kinetochore contains approximately 150 copies of the network. Interacts with the MIS12 complex subunits MIS12 DSN1, and PMF1. Interacts with the NDC80 complex subunit NDC80 during mitosis. Interacts with ZW10. Interacts with CETN3.</text>
</comment>
<comment type="subcellular location">
    <subcellularLocation>
        <location evidence="1">Nucleus</location>
    </subcellularLocation>
    <subcellularLocation>
        <location evidence="1">Chromosome</location>
        <location evidence="1">Centromere</location>
        <location evidence="1">Kinetochore</location>
    </subcellularLocation>
    <text evidence="1 2">Localizes to kinetochores from late prophase to anaphase (By similarity). Localizes to kinetochores both during mitosis and meiosis (By similarity).</text>
</comment>
<protein>
    <recommendedName>
        <fullName evidence="5">Outer kinetochore KNL1 complex subunit ZWINT</fullName>
    </recommendedName>
    <alternativeName>
        <fullName>ZW10 interactor</fullName>
    </alternativeName>
    <alternativeName>
        <fullName>ZW10-interacting protein 1</fullName>
        <shortName>Zwint-1</shortName>
    </alternativeName>
</protein>
<organism>
    <name type="scientific">Bos taurus</name>
    <name type="common">Bovine</name>
    <dbReference type="NCBI Taxonomy" id="9913"/>
    <lineage>
        <taxon>Eukaryota</taxon>
        <taxon>Metazoa</taxon>
        <taxon>Chordata</taxon>
        <taxon>Craniata</taxon>
        <taxon>Vertebrata</taxon>
        <taxon>Euteleostomi</taxon>
        <taxon>Mammalia</taxon>
        <taxon>Eutheria</taxon>
        <taxon>Laurasiatheria</taxon>
        <taxon>Artiodactyla</taxon>
        <taxon>Ruminantia</taxon>
        <taxon>Pecora</taxon>
        <taxon>Bovidae</taxon>
        <taxon>Bovinae</taxon>
        <taxon>Bos</taxon>
    </lineage>
</organism>
<name>ZWINT_BOVIN</name>
<keyword id="KW-0131">Cell cycle</keyword>
<keyword id="KW-0132">Cell division</keyword>
<keyword id="KW-0137">Centromere</keyword>
<keyword id="KW-0158">Chromosome</keyword>
<keyword id="KW-0175">Coiled coil</keyword>
<keyword id="KW-0995">Kinetochore</keyword>
<keyword id="KW-0498">Mitosis</keyword>
<keyword id="KW-0539">Nucleus</keyword>
<keyword id="KW-1185">Reference proteome</keyword>
<sequence length="286" mass="32614">MGAAESEVETAAREVLAKVADILEPVGFQEEAELPAQILAEFVMDSRKKDKLLCSQLQVVDFLQNFLVQEGTAQDQNPLASEDTSRQKALEAKEQWKELKATYQEHVEVITNSLTEALPKVEEAQIKQAQLQEALKQLQAKKQMAMEKLRIAQKQWQLEQEKHLQNLAEASSEVRERQTGAQQELQRLYQELGTLKQQAGQEKDKLQRHQTFLQLLYTLQGKQLFNEAEAEIPQELDLPKDKLQQVTQPQEQNTQDTMGREADNPQPVGDAGLPWLPGRQQHKEES</sequence>
<proteinExistence type="evidence at transcript level"/>
<reference evidence="6" key="1">
    <citation type="submission" date="2005-11" db="EMBL/GenBank/DDBJ databases">
        <authorList>
            <consortium name="NIH - Mammalian Gene Collection (MGC) project"/>
        </authorList>
    </citation>
    <scope>NUCLEOTIDE SEQUENCE [LARGE SCALE MRNA]</scope>
    <source>
        <strain>Crossbred X Angus</strain>
        <tissue>Liver</tissue>
    </source>
</reference>
<reference evidence="7" key="2">
    <citation type="submission" date="2018-03" db="EMBL/GenBank/DDBJ databases">
        <title>ARS-UCD1.2.</title>
        <authorList>
            <person name="Rosen B.D."/>
            <person name="Bickhart D.M."/>
            <person name="Koren S."/>
            <person name="Schnabel R.D."/>
            <person name="Hall R."/>
            <person name="Zimin A."/>
            <person name="Dreischer C."/>
            <person name="Schultheiss S."/>
            <person name="Schroeder S.G."/>
            <person name="Elsik C.G."/>
            <person name="Couldrey C."/>
            <person name="Liu G.E."/>
            <person name="Van Tassell C.P."/>
            <person name="Phillippy A.M."/>
            <person name="Smith T.P.L."/>
            <person name="Medrano J.F."/>
        </authorList>
    </citation>
    <scope>NUCLEOTIDE SEQUENCE [LARGE SCALE GENOMIC DNA]</scope>
    <source>
        <strain evidence="7">Hereford</strain>
    </source>
</reference>
<feature type="chain" id="PRO_0000249581" description="Outer kinetochore KNL1 complex subunit ZWINT">
    <location>
        <begin position="1"/>
        <end position="286"/>
    </location>
</feature>
<feature type="region of interest" description="Disordered" evidence="4">
    <location>
        <begin position="230"/>
        <end position="286"/>
    </location>
</feature>
<feature type="coiled-coil region" evidence="3">
    <location>
        <begin position="85"/>
        <end position="211"/>
    </location>
</feature>
<feature type="compositionally biased region" description="Low complexity" evidence="4">
    <location>
        <begin position="244"/>
        <end position="255"/>
    </location>
</feature>
<feature type="sequence conflict" description="In Ref. 1; AAI10185." evidence="5" ref="1">
    <original>L</original>
    <variation>Q</variation>
    <location>
        <position position="23"/>
    </location>
</feature>
<accession>Q2TBH8</accession>
<accession>F1N7G9</accession>